<reference key="1">
    <citation type="journal article" date="2005" name="Mol. Phylogenet. Evol.">
        <title>A phylogeny of the Caniformia (order Carnivora) based on 12 complete protein-coding mitochondrial genes.</title>
        <authorList>
            <person name="Delisle I."/>
            <person name="Strobeck C."/>
        </authorList>
    </citation>
    <scope>NUCLEOTIDE SEQUENCE [GENOMIC DNA]</scope>
</reference>
<feature type="chain" id="PRO_0000275131" description="NADH-ubiquinone oxidoreductase chain 4L">
    <location>
        <begin position="1"/>
        <end position="98"/>
    </location>
</feature>
<feature type="transmembrane region" description="Helical" evidence="3">
    <location>
        <begin position="1"/>
        <end position="21"/>
    </location>
</feature>
<feature type="transmembrane region" description="Helical" evidence="3">
    <location>
        <begin position="29"/>
        <end position="49"/>
    </location>
</feature>
<feature type="transmembrane region" description="Helical" evidence="3">
    <location>
        <begin position="61"/>
        <end position="81"/>
    </location>
</feature>
<geneLocation type="mitochondrion"/>
<protein>
    <recommendedName>
        <fullName>NADH-ubiquinone oxidoreductase chain 4L</fullName>
        <ecNumber>7.1.1.2</ecNumber>
    </recommendedName>
    <alternativeName>
        <fullName>NADH dehydrogenase subunit 4L</fullName>
    </alternativeName>
</protein>
<gene>
    <name type="primary">MT-ND4L</name>
    <name type="synonym">MTND4L</name>
    <name type="synonym">NADH4L</name>
    <name type="synonym">ND4L</name>
</gene>
<organism>
    <name type="scientific">Taxidea taxus</name>
    <name type="common">American badger</name>
    <name type="synonym">Ursus taxus</name>
    <dbReference type="NCBI Taxonomy" id="30554"/>
    <lineage>
        <taxon>Eukaryota</taxon>
        <taxon>Metazoa</taxon>
        <taxon>Chordata</taxon>
        <taxon>Craniata</taxon>
        <taxon>Vertebrata</taxon>
        <taxon>Euteleostomi</taxon>
        <taxon>Mammalia</taxon>
        <taxon>Eutheria</taxon>
        <taxon>Laurasiatheria</taxon>
        <taxon>Carnivora</taxon>
        <taxon>Caniformia</taxon>
        <taxon>Musteloidea</taxon>
        <taxon>Mustelidae</taxon>
        <taxon>Taxidiinae</taxon>
        <taxon>Taxidea</taxon>
    </lineage>
</organism>
<keyword id="KW-0249">Electron transport</keyword>
<keyword id="KW-0472">Membrane</keyword>
<keyword id="KW-0496">Mitochondrion</keyword>
<keyword id="KW-0999">Mitochondrion inner membrane</keyword>
<keyword id="KW-0520">NAD</keyword>
<keyword id="KW-0679">Respiratory chain</keyword>
<keyword id="KW-1278">Translocase</keyword>
<keyword id="KW-0812">Transmembrane</keyword>
<keyword id="KW-1133">Transmembrane helix</keyword>
<keyword id="KW-0813">Transport</keyword>
<keyword id="KW-0830">Ubiquinone</keyword>
<comment type="function">
    <text evidence="1">Core subunit of the mitochondrial membrane respiratory chain NADH dehydrogenase (Complex I) which catalyzes electron transfer from NADH through the respiratory chain, using ubiquinone as an electron acceptor. Part of the enzyme membrane arm which is embedded in the lipid bilayer and involved in proton translocation.</text>
</comment>
<comment type="catalytic activity">
    <reaction evidence="1">
        <text>a ubiquinone + NADH + 5 H(+)(in) = a ubiquinol + NAD(+) + 4 H(+)(out)</text>
        <dbReference type="Rhea" id="RHEA:29091"/>
        <dbReference type="Rhea" id="RHEA-COMP:9565"/>
        <dbReference type="Rhea" id="RHEA-COMP:9566"/>
        <dbReference type="ChEBI" id="CHEBI:15378"/>
        <dbReference type="ChEBI" id="CHEBI:16389"/>
        <dbReference type="ChEBI" id="CHEBI:17976"/>
        <dbReference type="ChEBI" id="CHEBI:57540"/>
        <dbReference type="ChEBI" id="CHEBI:57945"/>
        <dbReference type="EC" id="7.1.1.2"/>
    </reaction>
    <physiologicalReaction direction="left-to-right" evidence="1">
        <dbReference type="Rhea" id="RHEA:29092"/>
    </physiologicalReaction>
</comment>
<comment type="subunit">
    <text evidence="2">Core subunit of respiratory chain NADH dehydrogenase (Complex I) which is composed of 45 different subunits.</text>
</comment>
<comment type="subcellular location">
    <subcellularLocation>
        <location evidence="2">Mitochondrion inner membrane</location>
        <topology evidence="3">Multi-pass membrane protein</topology>
    </subcellularLocation>
</comment>
<comment type="similarity">
    <text evidence="4">Belongs to the complex I subunit 4L family.</text>
</comment>
<sequence length="98" mass="10837">MSMVYINIFLAFTLSFMGLLIYRSHLMSSLLCLEGMMLSLFVLMTVTILSNHFTLASMAPIILLVFAACEAALGLSLLVMVSNTYGTDYVQNLNLLQC</sequence>
<name>NU4LM_TAXTA</name>
<proteinExistence type="inferred from homology"/>
<dbReference type="EC" id="7.1.1.2"/>
<dbReference type="EMBL" id="AY598571">
    <property type="protein sequence ID" value="AAU00516.1"/>
    <property type="molecule type" value="Genomic_DNA"/>
</dbReference>
<dbReference type="RefSeq" id="YP_007625362.1">
    <property type="nucleotide sequence ID" value="NC_020646.1"/>
</dbReference>
<dbReference type="SMR" id="Q3L6R7"/>
<dbReference type="GeneID" id="14841917"/>
<dbReference type="CTD" id="4539"/>
<dbReference type="GO" id="GO:0005743">
    <property type="term" value="C:mitochondrial inner membrane"/>
    <property type="evidence" value="ECO:0000250"/>
    <property type="project" value="UniProtKB"/>
</dbReference>
<dbReference type="GO" id="GO:0045271">
    <property type="term" value="C:respiratory chain complex I"/>
    <property type="evidence" value="ECO:0000250"/>
    <property type="project" value="UniProtKB"/>
</dbReference>
<dbReference type="GO" id="GO:0008137">
    <property type="term" value="F:NADH dehydrogenase (ubiquinone) activity"/>
    <property type="evidence" value="ECO:0000250"/>
    <property type="project" value="UniProtKB"/>
</dbReference>
<dbReference type="GO" id="GO:0042773">
    <property type="term" value="P:ATP synthesis coupled electron transport"/>
    <property type="evidence" value="ECO:0007669"/>
    <property type="project" value="InterPro"/>
</dbReference>
<dbReference type="FunFam" id="1.10.287.3510:FF:000002">
    <property type="entry name" value="NADH-ubiquinone oxidoreductase chain 4L"/>
    <property type="match status" value="1"/>
</dbReference>
<dbReference type="Gene3D" id="1.10.287.3510">
    <property type="match status" value="1"/>
</dbReference>
<dbReference type="InterPro" id="IPR001133">
    <property type="entry name" value="NADH_UbQ_OxRdtase_chain4L/K"/>
</dbReference>
<dbReference type="InterPro" id="IPR039428">
    <property type="entry name" value="NUOK/Mnh_C1-like"/>
</dbReference>
<dbReference type="PANTHER" id="PTHR11434:SF0">
    <property type="entry name" value="NADH-UBIQUINONE OXIDOREDUCTASE CHAIN 4L"/>
    <property type="match status" value="1"/>
</dbReference>
<dbReference type="PANTHER" id="PTHR11434">
    <property type="entry name" value="NADH-UBIQUINONE OXIDOREDUCTASE SUBUNIT ND4L"/>
    <property type="match status" value="1"/>
</dbReference>
<dbReference type="Pfam" id="PF00420">
    <property type="entry name" value="Oxidored_q2"/>
    <property type="match status" value="1"/>
</dbReference>
<evidence type="ECO:0000250" key="1">
    <source>
        <dbReference type="UniProtKB" id="P03901"/>
    </source>
</evidence>
<evidence type="ECO:0000250" key="2">
    <source>
        <dbReference type="UniProtKB" id="P03902"/>
    </source>
</evidence>
<evidence type="ECO:0000255" key="3"/>
<evidence type="ECO:0000305" key="4"/>
<accession>Q3L6R7</accession>